<keyword id="KW-0119">Carbohydrate metabolism</keyword>
<keyword id="KW-0963">Cytoplasm</keyword>
<keyword id="KW-0413">Isomerase</keyword>
<keyword id="KW-1185">Reference proteome</keyword>
<feature type="chain" id="PRO_0000346184" description="D-ribose pyranase">
    <location>
        <begin position="1"/>
        <end position="131"/>
    </location>
</feature>
<feature type="active site" description="Proton donor" evidence="1">
    <location>
        <position position="20"/>
    </location>
</feature>
<feature type="binding site" evidence="1">
    <location>
        <position position="28"/>
    </location>
    <ligand>
        <name>substrate</name>
    </ligand>
</feature>
<feature type="binding site" evidence="1">
    <location>
        <position position="98"/>
    </location>
    <ligand>
        <name>substrate</name>
    </ligand>
</feature>
<feature type="binding site" evidence="1">
    <location>
        <begin position="120"/>
        <end position="122"/>
    </location>
    <ligand>
        <name>substrate</name>
    </ligand>
</feature>
<comment type="function">
    <text evidence="1">Catalyzes the interconversion of beta-pyran and beta-furan forms of D-ribose.</text>
</comment>
<comment type="catalytic activity">
    <reaction evidence="1">
        <text>beta-D-ribopyranose = beta-D-ribofuranose</text>
        <dbReference type="Rhea" id="RHEA:25432"/>
        <dbReference type="ChEBI" id="CHEBI:27476"/>
        <dbReference type="ChEBI" id="CHEBI:47002"/>
        <dbReference type="EC" id="5.4.99.62"/>
    </reaction>
</comment>
<comment type="pathway">
    <text evidence="1">Carbohydrate metabolism; D-ribose degradation; D-ribose 5-phosphate from beta-D-ribopyranose: step 1/2.</text>
</comment>
<comment type="subunit">
    <text evidence="1">Homodecamer.</text>
</comment>
<comment type="subcellular location">
    <subcellularLocation>
        <location evidence="1">Cytoplasm</location>
    </subcellularLocation>
</comment>
<comment type="similarity">
    <text evidence="1">Belongs to the RbsD / FucU family. RbsD subfamily.</text>
</comment>
<proteinExistence type="inferred from homology"/>
<reference key="1">
    <citation type="journal article" date="2006" name="Nat. Biotechnol.">
        <title>The genome and transcriptomes of the anti-tumor agent Clostridium novyi-NT.</title>
        <authorList>
            <person name="Bettegowda C."/>
            <person name="Huang X."/>
            <person name="Lin J."/>
            <person name="Cheong I."/>
            <person name="Kohli M."/>
            <person name="Szabo S.A."/>
            <person name="Zhang X."/>
            <person name="Diaz L.A. Jr."/>
            <person name="Velculescu V.E."/>
            <person name="Parmigiani G."/>
            <person name="Kinzler K.W."/>
            <person name="Vogelstein B."/>
            <person name="Zhou S."/>
        </authorList>
    </citation>
    <scope>NUCLEOTIDE SEQUENCE [LARGE SCALE GENOMIC DNA]</scope>
    <source>
        <strain>NT</strain>
    </source>
</reference>
<gene>
    <name evidence="1" type="primary">rbsD</name>
    <name type="ordered locus">NT01CX_0165</name>
</gene>
<protein>
    <recommendedName>
        <fullName evidence="1">D-ribose pyranase</fullName>
        <ecNumber evidence="1">5.4.99.62</ecNumber>
    </recommendedName>
</protein>
<dbReference type="EC" id="5.4.99.62" evidence="1"/>
<dbReference type="EMBL" id="CP000382">
    <property type="protein sequence ID" value="ABK62316.1"/>
    <property type="molecule type" value="Genomic_DNA"/>
</dbReference>
<dbReference type="RefSeq" id="WP_011722657.1">
    <property type="nucleotide sequence ID" value="NC_008593.1"/>
</dbReference>
<dbReference type="SMR" id="A0Q217"/>
<dbReference type="STRING" id="386415.NT01CX_0165"/>
<dbReference type="KEGG" id="cno:NT01CX_0165"/>
<dbReference type="eggNOG" id="COG1869">
    <property type="taxonomic scope" value="Bacteria"/>
</dbReference>
<dbReference type="HOGENOM" id="CLU_135498_0_0_9"/>
<dbReference type="UniPathway" id="UPA00916">
    <property type="reaction ID" value="UER00888"/>
</dbReference>
<dbReference type="Proteomes" id="UP000008220">
    <property type="component" value="Chromosome"/>
</dbReference>
<dbReference type="GO" id="GO:0005829">
    <property type="term" value="C:cytosol"/>
    <property type="evidence" value="ECO:0007669"/>
    <property type="project" value="TreeGrafter"/>
</dbReference>
<dbReference type="GO" id="GO:0062193">
    <property type="term" value="F:D-ribose pyranase activity"/>
    <property type="evidence" value="ECO:0007669"/>
    <property type="project" value="UniProtKB-EC"/>
</dbReference>
<dbReference type="GO" id="GO:0016872">
    <property type="term" value="F:intramolecular lyase activity"/>
    <property type="evidence" value="ECO:0007669"/>
    <property type="project" value="UniProtKB-UniRule"/>
</dbReference>
<dbReference type="GO" id="GO:0048029">
    <property type="term" value="F:monosaccharide binding"/>
    <property type="evidence" value="ECO:0007669"/>
    <property type="project" value="InterPro"/>
</dbReference>
<dbReference type="GO" id="GO:0019303">
    <property type="term" value="P:D-ribose catabolic process"/>
    <property type="evidence" value="ECO:0007669"/>
    <property type="project" value="UniProtKB-UniRule"/>
</dbReference>
<dbReference type="Gene3D" id="3.40.1650.10">
    <property type="entry name" value="RbsD-like domain"/>
    <property type="match status" value="1"/>
</dbReference>
<dbReference type="HAMAP" id="MF_01661">
    <property type="entry name" value="D_rib_pyranase"/>
    <property type="match status" value="1"/>
</dbReference>
<dbReference type="InterPro" id="IPR023064">
    <property type="entry name" value="D-ribose_pyranase"/>
</dbReference>
<dbReference type="InterPro" id="IPR023750">
    <property type="entry name" value="RbsD-like_sf"/>
</dbReference>
<dbReference type="InterPro" id="IPR007721">
    <property type="entry name" value="RbsD_FucU"/>
</dbReference>
<dbReference type="NCBIfam" id="NF008761">
    <property type="entry name" value="PRK11797.1"/>
    <property type="match status" value="1"/>
</dbReference>
<dbReference type="PANTHER" id="PTHR37831">
    <property type="entry name" value="D-RIBOSE PYRANASE"/>
    <property type="match status" value="1"/>
</dbReference>
<dbReference type="PANTHER" id="PTHR37831:SF1">
    <property type="entry name" value="D-RIBOSE PYRANASE"/>
    <property type="match status" value="1"/>
</dbReference>
<dbReference type="Pfam" id="PF05025">
    <property type="entry name" value="RbsD_FucU"/>
    <property type="match status" value="1"/>
</dbReference>
<dbReference type="SUPFAM" id="SSF102546">
    <property type="entry name" value="RbsD-like"/>
    <property type="match status" value="1"/>
</dbReference>
<evidence type="ECO:0000255" key="1">
    <source>
        <dbReference type="HAMAP-Rule" id="MF_01661"/>
    </source>
</evidence>
<organism>
    <name type="scientific">Clostridium novyi (strain NT)</name>
    <dbReference type="NCBI Taxonomy" id="386415"/>
    <lineage>
        <taxon>Bacteria</taxon>
        <taxon>Bacillati</taxon>
        <taxon>Bacillota</taxon>
        <taxon>Clostridia</taxon>
        <taxon>Eubacteriales</taxon>
        <taxon>Clostridiaceae</taxon>
        <taxon>Clostridium</taxon>
    </lineage>
</organism>
<sequence>MKKTPLLNSSICEVVSKMGHTDMIAIGDSGLPIPDDTKRIDLALIKGVPTFMQTLKAVLLEQQVEEVIIAHETKEVSPETFENIKKEIGDVKITFISHEELKKELSNCKAVIRTGEQTPYANIILKSGVVF</sequence>
<name>RBSD_CLONN</name>
<accession>A0Q217</accession>